<evidence type="ECO:0000250" key="1"/>
<evidence type="ECO:0000250" key="2">
    <source>
        <dbReference type="UniProtKB" id="P41209"/>
    </source>
</evidence>
<evidence type="ECO:0000255" key="3">
    <source>
        <dbReference type="PROSITE-ProRule" id="PRU00448"/>
    </source>
</evidence>
<evidence type="ECO:0000256" key="4">
    <source>
        <dbReference type="SAM" id="MobiDB-lite"/>
    </source>
</evidence>
<evidence type="ECO:0000269" key="5">
    <source>
    </source>
</evidence>
<evidence type="ECO:0000269" key="6">
    <source>
    </source>
</evidence>
<evidence type="ECO:0000269" key="7">
    <source>
    </source>
</evidence>
<evidence type="ECO:0000305" key="8"/>
<evidence type="ECO:0000312" key="9">
    <source>
        <dbReference type="HGNC" id="HGNC:1866"/>
    </source>
</evidence>
<feature type="chain" id="PRO_0000073559" description="Centrin-1">
    <location>
        <begin position="1"/>
        <end position="172"/>
    </location>
</feature>
<feature type="domain" description="EF-hand 1" evidence="3">
    <location>
        <begin position="28"/>
        <end position="63"/>
    </location>
</feature>
<feature type="domain" description="EF-hand 2" evidence="3">
    <location>
        <begin position="64"/>
        <end position="99"/>
    </location>
</feature>
<feature type="domain" description="EF-hand 3" evidence="3">
    <location>
        <begin position="101"/>
        <end position="136"/>
    </location>
</feature>
<feature type="domain" description="EF-hand 4" evidence="3">
    <location>
        <begin position="137"/>
        <end position="172"/>
    </location>
</feature>
<feature type="region of interest" description="Disordered" evidence="4">
    <location>
        <begin position="1"/>
        <end position="31"/>
    </location>
</feature>
<feature type="binding site" evidence="3">
    <location>
        <position position="41"/>
    </location>
    <ligand>
        <name>Ca(2+)</name>
        <dbReference type="ChEBI" id="CHEBI:29108"/>
        <label>1</label>
    </ligand>
</feature>
<feature type="binding site" evidence="3">
    <location>
        <position position="43"/>
    </location>
    <ligand>
        <name>Ca(2+)</name>
        <dbReference type="ChEBI" id="CHEBI:29108"/>
        <label>1</label>
    </ligand>
</feature>
<feature type="binding site" evidence="3">
    <location>
        <position position="45"/>
    </location>
    <ligand>
        <name>Ca(2+)</name>
        <dbReference type="ChEBI" id="CHEBI:29108"/>
        <label>1</label>
    </ligand>
</feature>
<feature type="binding site" evidence="3">
    <location>
        <position position="47"/>
    </location>
    <ligand>
        <name>Ca(2+)</name>
        <dbReference type="ChEBI" id="CHEBI:29108"/>
        <label>1</label>
    </ligand>
</feature>
<feature type="binding site" evidence="3">
    <location>
        <position position="52"/>
    </location>
    <ligand>
        <name>Ca(2+)</name>
        <dbReference type="ChEBI" id="CHEBI:29108"/>
        <label>1</label>
    </ligand>
</feature>
<feature type="binding site" evidence="3">
    <location>
        <position position="150"/>
    </location>
    <ligand>
        <name>Ca(2+)</name>
        <dbReference type="ChEBI" id="CHEBI:29108"/>
        <label>2</label>
    </ligand>
</feature>
<feature type="binding site" evidence="3">
    <location>
        <position position="152"/>
    </location>
    <ligand>
        <name>Ca(2+)</name>
        <dbReference type="ChEBI" id="CHEBI:29108"/>
        <label>2</label>
    </ligand>
</feature>
<feature type="binding site" evidence="3">
    <location>
        <position position="154"/>
    </location>
    <ligand>
        <name>Ca(2+)</name>
        <dbReference type="ChEBI" id="CHEBI:29108"/>
        <label>2</label>
    </ligand>
</feature>
<feature type="binding site" evidence="3">
    <location>
        <position position="156"/>
    </location>
    <ligand>
        <name>Ca(2+)</name>
        <dbReference type="ChEBI" id="CHEBI:29108"/>
        <label>2</label>
    </ligand>
</feature>
<feature type="binding site" evidence="3">
    <location>
        <position position="161"/>
    </location>
    <ligand>
        <name>Ca(2+)</name>
        <dbReference type="ChEBI" id="CHEBI:29108"/>
        <label>2</label>
    </ligand>
</feature>
<accession>Q12798</accession>
<accession>B2R536</accession>
<dbReference type="EMBL" id="U03270">
    <property type="protein sequence ID" value="AAC27343.1"/>
    <property type="molecule type" value="mRNA"/>
</dbReference>
<dbReference type="EMBL" id="AK312047">
    <property type="protein sequence ID" value="BAG34983.1"/>
    <property type="molecule type" value="mRNA"/>
</dbReference>
<dbReference type="EMBL" id="CH471113">
    <property type="protein sequence ID" value="EAX01727.1"/>
    <property type="molecule type" value="Genomic_DNA"/>
</dbReference>
<dbReference type="EMBL" id="BC029515">
    <property type="protein sequence ID" value="AAH29515.1"/>
    <property type="molecule type" value="mRNA"/>
</dbReference>
<dbReference type="CCDS" id="CCDS11820.1"/>
<dbReference type="PIR" id="I38424">
    <property type="entry name" value="I38424"/>
</dbReference>
<dbReference type="RefSeq" id="NP_004057.1">
    <property type="nucleotide sequence ID" value="NM_004066.3"/>
</dbReference>
<dbReference type="SMR" id="Q12798"/>
<dbReference type="BioGRID" id="107495">
    <property type="interactions" value="61"/>
</dbReference>
<dbReference type="FunCoup" id="Q12798">
    <property type="interactions" value="52"/>
</dbReference>
<dbReference type="IntAct" id="Q12798">
    <property type="interactions" value="49"/>
</dbReference>
<dbReference type="MINT" id="Q12798"/>
<dbReference type="STRING" id="9606.ENSP00000319052"/>
<dbReference type="iPTMnet" id="Q12798"/>
<dbReference type="PhosphoSitePlus" id="Q12798"/>
<dbReference type="BioMuta" id="CETN1"/>
<dbReference type="DMDM" id="2493440"/>
<dbReference type="jPOST" id="Q12798"/>
<dbReference type="MassIVE" id="Q12798"/>
<dbReference type="PaxDb" id="9606-ENSP00000319052"/>
<dbReference type="PeptideAtlas" id="Q12798"/>
<dbReference type="ProteomicsDB" id="58948"/>
<dbReference type="Antibodypedia" id="5901">
    <property type="antibodies" value="284 antibodies from 30 providers"/>
</dbReference>
<dbReference type="DNASU" id="1068"/>
<dbReference type="Ensembl" id="ENST00000327228.5">
    <property type="protein sequence ID" value="ENSP00000319052.3"/>
    <property type="gene ID" value="ENSG00000177143.5"/>
</dbReference>
<dbReference type="GeneID" id="1068"/>
<dbReference type="KEGG" id="hsa:1068"/>
<dbReference type="MANE-Select" id="ENST00000327228.5">
    <property type="protein sequence ID" value="ENSP00000319052.3"/>
    <property type="RefSeq nucleotide sequence ID" value="NM_004066.3"/>
    <property type="RefSeq protein sequence ID" value="NP_004057.1"/>
</dbReference>
<dbReference type="UCSC" id="uc002kko.2">
    <property type="organism name" value="human"/>
</dbReference>
<dbReference type="AGR" id="HGNC:1866"/>
<dbReference type="CTD" id="1068"/>
<dbReference type="DisGeNET" id="1068"/>
<dbReference type="GeneCards" id="CETN1"/>
<dbReference type="HGNC" id="HGNC:1866">
    <property type="gene designation" value="CETN1"/>
</dbReference>
<dbReference type="HPA" id="ENSG00000177143">
    <property type="expression patterns" value="Tissue enriched (testis)"/>
</dbReference>
<dbReference type="MIM" id="603187">
    <property type="type" value="gene"/>
</dbReference>
<dbReference type="neXtProt" id="NX_Q12798"/>
<dbReference type="OpenTargets" id="ENSG00000177143"/>
<dbReference type="PharmGKB" id="PA26419"/>
<dbReference type="VEuPathDB" id="HostDB:ENSG00000177143"/>
<dbReference type="eggNOG" id="KOG0028">
    <property type="taxonomic scope" value="Eukaryota"/>
</dbReference>
<dbReference type="GeneTree" id="ENSGT00940000157209"/>
<dbReference type="HOGENOM" id="CLU_061288_18_2_1"/>
<dbReference type="InParanoid" id="Q12798"/>
<dbReference type="OMA" id="CIEAREF"/>
<dbReference type="OrthoDB" id="343296at2759"/>
<dbReference type="PAN-GO" id="Q12798">
    <property type="GO annotations" value="6 GO annotations based on evolutionary models"/>
</dbReference>
<dbReference type="PhylomeDB" id="Q12798"/>
<dbReference type="TreeFam" id="TF101141"/>
<dbReference type="PathwayCommons" id="Q12798"/>
<dbReference type="Reactome" id="R-HSA-9613829">
    <property type="pathway name" value="Chaperone Mediated Autophagy"/>
</dbReference>
<dbReference type="Reactome" id="R-HSA-9615710">
    <property type="pathway name" value="Late endosomal microautophagy"/>
</dbReference>
<dbReference type="Reactome" id="R-HSA-9646399">
    <property type="pathway name" value="Aggrephagy"/>
</dbReference>
<dbReference type="SignaLink" id="Q12798"/>
<dbReference type="SIGNOR" id="Q12798"/>
<dbReference type="BioGRID-ORCS" id="1068">
    <property type="hits" value="7 hits in 1144 CRISPR screens"/>
</dbReference>
<dbReference type="CD-CODE" id="8C2F96ED">
    <property type="entry name" value="Centrosome"/>
</dbReference>
<dbReference type="GeneWiki" id="CETN1"/>
<dbReference type="GenomeRNAi" id="1068"/>
<dbReference type="Pharos" id="Q12798">
    <property type="development level" value="Tbio"/>
</dbReference>
<dbReference type="PRO" id="PR:Q12798"/>
<dbReference type="Proteomes" id="UP000005640">
    <property type="component" value="Chromosome 18"/>
</dbReference>
<dbReference type="RNAct" id="Q12798">
    <property type="molecule type" value="protein"/>
</dbReference>
<dbReference type="Bgee" id="ENSG00000177143">
    <property type="expression patterns" value="Expressed in left testis and 46 other cell types or tissues"/>
</dbReference>
<dbReference type="ExpressionAtlas" id="Q12798">
    <property type="expression patterns" value="baseline and differential"/>
</dbReference>
<dbReference type="GO" id="GO:0005814">
    <property type="term" value="C:centriole"/>
    <property type="evidence" value="ECO:0000314"/>
    <property type="project" value="MGI"/>
</dbReference>
<dbReference type="GO" id="GO:0005813">
    <property type="term" value="C:centrosome"/>
    <property type="evidence" value="ECO:0000314"/>
    <property type="project" value="UniProtKB"/>
</dbReference>
<dbReference type="GO" id="GO:0005829">
    <property type="term" value="C:cytosol"/>
    <property type="evidence" value="ECO:0000304"/>
    <property type="project" value="Reactome"/>
</dbReference>
<dbReference type="GO" id="GO:0005634">
    <property type="term" value="C:nucleus"/>
    <property type="evidence" value="ECO:0000318"/>
    <property type="project" value="GO_Central"/>
</dbReference>
<dbReference type="GO" id="GO:0032391">
    <property type="term" value="C:photoreceptor connecting cilium"/>
    <property type="evidence" value="ECO:0000250"/>
    <property type="project" value="UniProtKB"/>
</dbReference>
<dbReference type="GO" id="GO:0000922">
    <property type="term" value="C:spindle pole"/>
    <property type="evidence" value="ECO:0000314"/>
    <property type="project" value="UniProtKB"/>
</dbReference>
<dbReference type="GO" id="GO:0005509">
    <property type="term" value="F:calcium ion binding"/>
    <property type="evidence" value="ECO:0000318"/>
    <property type="project" value="GO_Central"/>
</dbReference>
<dbReference type="GO" id="GO:0031683">
    <property type="term" value="F:G-protein beta/gamma-subunit complex binding"/>
    <property type="evidence" value="ECO:0007669"/>
    <property type="project" value="Ensembl"/>
</dbReference>
<dbReference type="GO" id="GO:0032795">
    <property type="term" value="F:heterotrimeric G-protein binding"/>
    <property type="evidence" value="ECO:0007669"/>
    <property type="project" value="Ensembl"/>
</dbReference>
<dbReference type="GO" id="GO:0008017">
    <property type="term" value="F:microtubule binding"/>
    <property type="evidence" value="ECO:0007669"/>
    <property type="project" value="Ensembl"/>
</dbReference>
<dbReference type="GO" id="GO:0051301">
    <property type="term" value="P:cell division"/>
    <property type="evidence" value="ECO:0007669"/>
    <property type="project" value="UniProtKB-KW"/>
</dbReference>
<dbReference type="GO" id="GO:0034605">
    <property type="term" value="P:cellular response to heat"/>
    <property type="evidence" value="ECO:0007669"/>
    <property type="project" value="Ensembl"/>
</dbReference>
<dbReference type="GO" id="GO:0007099">
    <property type="term" value="P:centriole replication"/>
    <property type="evidence" value="ECO:0000318"/>
    <property type="project" value="GO_Central"/>
</dbReference>
<dbReference type="GO" id="GO:0000226">
    <property type="term" value="P:microtubule cytoskeleton organization"/>
    <property type="evidence" value="ECO:0000318"/>
    <property type="project" value="GO_Central"/>
</dbReference>
<dbReference type="CDD" id="cd00051">
    <property type="entry name" value="EFh"/>
    <property type="match status" value="2"/>
</dbReference>
<dbReference type="FunFam" id="1.10.238.10:FF:000077">
    <property type="entry name" value="Centrin 1"/>
    <property type="match status" value="1"/>
</dbReference>
<dbReference type="FunFam" id="1.10.238.10:FF:000070">
    <property type="entry name" value="Centrin-1"/>
    <property type="match status" value="1"/>
</dbReference>
<dbReference type="Gene3D" id="1.10.238.10">
    <property type="entry name" value="EF-hand"/>
    <property type="match status" value="3"/>
</dbReference>
<dbReference type="InterPro" id="IPR050145">
    <property type="entry name" value="Centrin_CML-like"/>
</dbReference>
<dbReference type="InterPro" id="IPR011992">
    <property type="entry name" value="EF-hand-dom_pair"/>
</dbReference>
<dbReference type="InterPro" id="IPR018247">
    <property type="entry name" value="EF_Hand_1_Ca_BS"/>
</dbReference>
<dbReference type="InterPro" id="IPR002048">
    <property type="entry name" value="EF_hand_dom"/>
</dbReference>
<dbReference type="InterPro" id="IPR000629">
    <property type="entry name" value="RNA-helicase_DEAD-box_CS"/>
</dbReference>
<dbReference type="PANTHER" id="PTHR23050">
    <property type="entry name" value="CALCIUM BINDING PROTEIN"/>
    <property type="match status" value="1"/>
</dbReference>
<dbReference type="Pfam" id="PF13499">
    <property type="entry name" value="EF-hand_7"/>
    <property type="match status" value="2"/>
</dbReference>
<dbReference type="SMART" id="SM00054">
    <property type="entry name" value="EFh"/>
    <property type="match status" value="4"/>
</dbReference>
<dbReference type="SUPFAM" id="SSF47473">
    <property type="entry name" value="EF-hand"/>
    <property type="match status" value="1"/>
</dbReference>
<dbReference type="PROSITE" id="PS00018">
    <property type="entry name" value="EF_HAND_1"/>
    <property type="match status" value="2"/>
</dbReference>
<dbReference type="PROSITE" id="PS50222">
    <property type="entry name" value="EF_HAND_2"/>
    <property type="match status" value="4"/>
</dbReference>
<name>CETN1_HUMAN</name>
<reference key="1">
    <citation type="journal article" date="1994" name="J. Cell Sci.">
        <title>Cloning of a cDNA encoding human centrin, an EF-hand protein of centrosomes and mitotic spindle poles.</title>
        <authorList>
            <person name="Errabolu R."/>
            <person name="Sanders M.A."/>
            <person name="Salisbury J.L."/>
        </authorList>
    </citation>
    <scope>NUCLEOTIDE SEQUENCE [MRNA]</scope>
    <scope>FUNCTION</scope>
    <scope>SUBCELLULAR LOCATION</scope>
    <source>
        <tissue>Testis</tissue>
    </source>
</reference>
<reference key="2">
    <citation type="journal article" date="2004" name="Nat. Genet.">
        <title>Complete sequencing and characterization of 21,243 full-length human cDNAs.</title>
        <authorList>
            <person name="Ota T."/>
            <person name="Suzuki Y."/>
            <person name="Nishikawa T."/>
            <person name="Otsuki T."/>
            <person name="Sugiyama T."/>
            <person name="Irie R."/>
            <person name="Wakamatsu A."/>
            <person name="Hayashi K."/>
            <person name="Sato H."/>
            <person name="Nagai K."/>
            <person name="Kimura K."/>
            <person name="Makita H."/>
            <person name="Sekine M."/>
            <person name="Obayashi M."/>
            <person name="Nishi T."/>
            <person name="Shibahara T."/>
            <person name="Tanaka T."/>
            <person name="Ishii S."/>
            <person name="Yamamoto J."/>
            <person name="Saito K."/>
            <person name="Kawai Y."/>
            <person name="Isono Y."/>
            <person name="Nakamura Y."/>
            <person name="Nagahari K."/>
            <person name="Murakami K."/>
            <person name="Yasuda T."/>
            <person name="Iwayanagi T."/>
            <person name="Wagatsuma M."/>
            <person name="Shiratori A."/>
            <person name="Sudo H."/>
            <person name="Hosoiri T."/>
            <person name="Kaku Y."/>
            <person name="Kodaira H."/>
            <person name="Kondo H."/>
            <person name="Sugawara M."/>
            <person name="Takahashi M."/>
            <person name="Kanda K."/>
            <person name="Yokoi T."/>
            <person name="Furuya T."/>
            <person name="Kikkawa E."/>
            <person name="Omura Y."/>
            <person name="Abe K."/>
            <person name="Kamihara K."/>
            <person name="Katsuta N."/>
            <person name="Sato K."/>
            <person name="Tanikawa M."/>
            <person name="Yamazaki M."/>
            <person name="Ninomiya K."/>
            <person name="Ishibashi T."/>
            <person name="Yamashita H."/>
            <person name="Murakawa K."/>
            <person name="Fujimori K."/>
            <person name="Tanai H."/>
            <person name="Kimata M."/>
            <person name="Watanabe M."/>
            <person name="Hiraoka S."/>
            <person name="Chiba Y."/>
            <person name="Ishida S."/>
            <person name="Ono Y."/>
            <person name="Takiguchi S."/>
            <person name="Watanabe S."/>
            <person name="Yosida M."/>
            <person name="Hotuta T."/>
            <person name="Kusano J."/>
            <person name="Kanehori K."/>
            <person name="Takahashi-Fujii A."/>
            <person name="Hara H."/>
            <person name="Tanase T.-O."/>
            <person name="Nomura Y."/>
            <person name="Togiya S."/>
            <person name="Komai F."/>
            <person name="Hara R."/>
            <person name="Takeuchi K."/>
            <person name="Arita M."/>
            <person name="Imose N."/>
            <person name="Musashino K."/>
            <person name="Yuuki H."/>
            <person name="Oshima A."/>
            <person name="Sasaki N."/>
            <person name="Aotsuka S."/>
            <person name="Yoshikawa Y."/>
            <person name="Matsunawa H."/>
            <person name="Ichihara T."/>
            <person name="Shiohata N."/>
            <person name="Sano S."/>
            <person name="Moriya S."/>
            <person name="Momiyama H."/>
            <person name="Satoh N."/>
            <person name="Takami S."/>
            <person name="Terashima Y."/>
            <person name="Suzuki O."/>
            <person name="Nakagawa S."/>
            <person name="Senoh A."/>
            <person name="Mizoguchi H."/>
            <person name="Goto Y."/>
            <person name="Shimizu F."/>
            <person name="Wakebe H."/>
            <person name="Hishigaki H."/>
            <person name="Watanabe T."/>
            <person name="Sugiyama A."/>
            <person name="Takemoto M."/>
            <person name="Kawakami B."/>
            <person name="Yamazaki M."/>
            <person name="Watanabe K."/>
            <person name="Kumagai A."/>
            <person name="Itakura S."/>
            <person name="Fukuzumi Y."/>
            <person name="Fujimori Y."/>
            <person name="Komiyama M."/>
            <person name="Tashiro H."/>
            <person name="Tanigami A."/>
            <person name="Fujiwara T."/>
            <person name="Ono T."/>
            <person name="Yamada K."/>
            <person name="Fujii Y."/>
            <person name="Ozaki K."/>
            <person name="Hirao M."/>
            <person name="Ohmori Y."/>
            <person name="Kawabata A."/>
            <person name="Hikiji T."/>
            <person name="Kobatake N."/>
            <person name="Inagaki H."/>
            <person name="Ikema Y."/>
            <person name="Okamoto S."/>
            <person name="Okitani R."/>
            <person name="Kawakami T."/>
            <person name="Noguchi S."/>
            <person name="Itoh T."/>
            <person name="Shigeta K."/>
            <person name="Senba T."/>
            <person name="Matsumura K."/>
            <person name="Nakajima Y."/>
            <person name="Mizuno T."/>
            <person name="Morinaga M."/>
            <person name="Sasaki M."/>
            <person name="Togashi T."/>
            <person name="Oyama M."/>
            <person name="Hata H."/>
            <person name="Watanabe M."/>
            <person name="Komatsu T."/>
            <person name="Mizushima-Sugano J."/>
            <person name="Satoh T."/>
            <person name="Shirai Y."/>
            <person name="Takahashi Y."/>
            <person name="Nakagawa K."/>
            <person name="Okumura K."/>
            <person name="Nagase T."/>
            <person name="Nomura N."/>
            <person name="Kikuchi H."/>
            <person name="Masuho Y."/>
            <person name="Yamashita R."/>
            <person name="Nakai K."/>
            <person name="Yada T."/>
            <person name="Nakamura Y."/>
            <person name="Ohara O."/>
            <person name="Isogai T."/>
            <person name="Sugano S."/>
        </authorList>
    </citation>
    <scope>NUCLEOTIDE SEQUENCE [LARGE SCALE MRNA]</scope>
    <source>
        <tissue>Testis</tissue>
    </source>
</reference>
<reference key="3">
    <citation type="submission" date="2005-09" db="EMBL/GenBank/DDBJ databases">
        <authorList>
            <person name="Mural R.J."/>
            <person name="Istrail S."/>
            <person name="Sutton G.G."/>
            <person name="Florea L."/>
            <person name="Halpern A.L."/>
            <person name="Mobarry C.M."/>
            <person name="Lippert R."/>
            <person name="Walenz B."/>
            <person name="Shatkay H."/>
            <person name="Dew I."/>
            <person name="Miller J.R."/>
            <person name="Flanigan M.J."/>
            <person name="Edwards N.J."/>
            <person name="Bolanos R."/>
            <person name="Fasulo D."/>
            <person name="Halldorsson B.V."/>
            <person name="Hannenhalli S."/>
            <person name="Turner R."/>
            <person name="Yooseph S."/>
            <person name="Lu F."/>
            <person name="Nusskern D.R."/>
            <person name="Shue B.C."/>
            <person name="Zheng X.H."/>
            <person name="Zhong F."/>
            <person name="Delcher A.L."/>
            <person name="Huson D.H."/>
            <person name="Kravitz S.A."/>
            <person name="Mouchard L."/>
            <person name="Reinert K."/>
            <person name="Remington K.A."/>
            <person name="Clark A.G."/>
            <person name="Waterman M.S."/>
            <person name="Eichler E.E."/>
            <person name="Adams M.D."/>
            <person name="Hunkapiller M.W."/>
            <person name="Myers E.W."/>
            <person name="Venter J.C."/>
        </authorList>
    </citation>
    <scope>NUCLEOTIDE SEQUENCE [LARGE SCALE GENOMIC DNA]</scope>
</reference>
<reference key="4">
    <citation type="journal article" date="2004" name="Genome Res.">
        <title>The status, quality, and expansion of the NIH full-length cDNA project: the Mammalian Gene Collection (MGC).</title>
        <authorList>
            <consortium name="The MGC Project Team"/>
        </authorList>
    </citation>
    <scope>NUCLEOTIDE SEQUENCE [LARGE SCALE MRNA]</scope>
    <source>
        <tissue>Testis</tissue>
    </source>
</reference>
<reference key="5">
    <citation type="journal article" date="2010" name="Dev. Cell">
        <title>Pitchfork regulates primary cilia disassembly and left-right asymmetry.</title>
        <authorList>
            <person name="Kinzel D."/>
            <person name="Boldt K."/>
            <person name="Davis E.E."/>
            <person name="Burtscher I."/>
            <person name="Trumbach D."/>
            <person name="Diplas B."/>
            <person name="Attie-Bitach T."/>
            <person name="Wurst W."/>
            <person name="Katsanis N."/>
            <person name="Ueffing M."/>
            <person name="Lickert H."/>
        </authorList>
    </citation>
    <scope>INTERACTION WITH CIMAP3</scope>
</reference>
<reference key="6">
    <citation type="journal article" date="2023" name="Cell Death Dis.">
        <title>USP49 deubiquitinase regulates the mitotic spindle checkpoint and prevents aneuploidy.</title>
        <authorList>
            <person name="Campos-Iglesias D."/>
            <person name="Fraile J.M."/>
            <person name="Bretones G."/>
            <person name="Montero A.A."/>
            <person name="Bonzon-Kulichenko E."/>
            <person name="Vazquez J."/>
            <person name="Lopez-Otin C."/>
            <person name="Freije J.M.P."/>
        </authorList>
    </citation>
    <scope>INTERACTION WITH USP49</scope>
</reference>
<keyword id="KW-0106">Calcium</keyword>
<keyword id="KW-0131">Cell cycle</keyword>
<keyword id="KW-0132">Cell division</keyword>
<keyword id="KW-0966">Cell projection</keyword>
<keyword id="KW-0963">Cytoplasm</keyword>
<keyword id="KW-0206">Cytoskeleton</keyword>
<keyword id="KW-0479">Metal-binding</keyword>
<keyword id="KW-0498">Mitosis</keyword>
<keyword id="KW-1267">Proteomics identification</keyword>
<keyword id="KW-1185">Reference proteome</keyword>
<keyword id="KW-0677">Repeat</keyword>
<proteinExistence type="evidence at protein level"/>
<comment type="function">
    <text evidence="2 7">Plays a fundamental role in microtubule-organizing center structure and function (PubMed:8175926). Plays a role in sperm cilia formation (By similarity).</text>
</comment>
<comment type="subunit">
    <text evidence="1 5 6">Monomer (By similarity). Interacts with CIMAP3 (PubMed:20643351). Interacts with USP49 (PubMed:36702832).</text>
</comment>
<comment type="interaction">
    <interactant intactId="EBI-2512818">
        <id>Q12798</id>
    </interactant>
    <interactant intactId="EBI-2561090">
        <id>Q8NA72</id>
        <label>POC5</label>
    </interactant>
    <organismsDiffer>false</organismsDiffer>
    <experiments>9</experiments>
</comment>
<comment type="interaction">
    <interactant intactId="EBI-2512818">
        <id>Q12798</id>
    </interactant>
    <interactant intactId="EBI-11751537">
        <id>Q8NA72-3</id>
        <label>POC5</label>
    </interactant>
    <organismsDiffer>false</organismsDiffer>
    <experiments>4</experiments>
</comment>
<comment type="interaction">
    <interactant intactId="EBI-2512818">
        <id>Q12798</id>
    </interactant>
    <interactant intactId="EBI-10743958">
        <id>Q2NKQ1</id>
        <label>SGSM1</label>
    </interactant>
    <organismsDiffer>false</organismsDiffer>
    <experiments>5</experiments>
</comment>
<comment type="interaction">
    <interactant intactId="EBI-2512818">
        <id>Q12798</id>
    </interactant>
    <interactant intactId="EBI-10182463">
        <id>Q2NKQ1-4</id>
        <label>SGSM1</label>
    </interactant>
    <organismsDiffer>false</organismsDiffer>
    <experiments>7</experiments>
</comment>
<comment type="interaction">
    <interactant intactId="EBI-2512818">
        <id>Q12798</id>
    </interactant>
    <interactant intactId="EBI-8028844">
        <id>O76080</id>
        <label>ZFAND5</label>
    </interactant>
    <organismsDiffer>false</organismsDiffer>
    <experiments>2</experiments>
</comment>
<comment type="subcellular location">
    <subcellularLocation>
        <location evidence="7">Cytoplasm</location>
        <location evidence="7">Cytoskeleton</location>
        <location evidence="7">Microtubule organizing center</location>
        <location evidence="7">Centrosome</location>
    </subcellularLocation>
    <subcellularLocation>
        <location evidence="2">Cell projection</location>
        <location evidence="2">Cilium</location>
    </subcellularLocation>
    <text evidence="2 7">Centrosome of interphase and mitotic cells. In the retinal photoreceptor cells, localizes at the connecting cilium, a thin bridge linking the cell body and the light-sensing outer segment (By similarity).</text>
</comment>
<comment type="miscellaneous">
    <text>Binds two moles of calcium per mole of protein.</text>
</comment>
<comment type="similarity">
    <text evidence="8">Belongs to the centrin family.</text>
</comment>
<organism>
    <name type="scientific">Homo sapiens</name>
    <name type="common">Human</name>
    <dbReference type="NCBI Taxonomy" id="9606"/>
    <lineage>
        <taxon>Eukaryota</taxon>
        <taxon>Metazoa</taxon>
        <taxon>Chordata</taxon>
        <taxon>Craniata</taxon>
        <taxon>Vertebrata</taxon>
        <taxon>Euteleostomi</taxon>
        <taxon>Mammalia</taxon>
        <taxon>Eutheria</taxon>
        <taxon>Euarchontoglires</taxon>
        <taxon>Primates</taxon>
        <taxon>Haplorrhini</taxon>
        <taxon>Catarrhini</taxon>
        <taxon>Hominidae</taxon>
        <taxon>Homo</taxon>
    </lineage>
</organism>
<sequence>MASGFKKPSAASTGQKRKVAPKPELTEDQKQEVREAFDLFDVDGSGTIDAKELKVAMRALGFEPRKEEMKKMISEVDREGTGKISFNDFLAVMTQKMSEKDTKEEILKAFRLFDDDETGKISFKNLKRVANELGENLTDEELQEMIDEADRDGDGEVNEEEFLRIMKKTSLY</sequence>
<gene>
    <name evidence="9" type="primary">CETN1</name>
    <name type="synonym">CEN1</name>
    <name type="synonym">CETN</name>
</gene>
<protein>
    <recommendedName>
        <fullName evidence="8">Centrin-1</fullName>
    </recommendedName>
    <alternativeName>
        <fullName>Caltractin isoform 2</fullName>
    </alternativeName>
</protein>